<gene>
    <name type="primary">FES1</name>
    <name type="ordered locus">CNBD3250</name>
</gene>
<accession>P0CN69</accession>
<accession>Q55TX8</accession>
<accession>Q5KIG0</accession>
<feature type="chain" id="PRO_0000410089" description="Hsp70 nucleotide exchange factor FES1">
    <location>
        <begin position="1"/>
        <end position="379"/>
    </location>
</feature>
<feature type="repeat" description="ARM 1">
    <location>
        <begin position="25"/>
        <end position="114"/>
    </location>
</feature>
<feature type="repeat" description="ARM 2">
    <location>
        <begin position="133"/>
        <end position="172"/>
    </location>
</feature>
<feature type="repeat" description="ARM 3">
    <location>
        <begin position="175"/>
        <end position="220"/>
    </location>
</feature>
<feature type="region of interest" description="Disordered" evidence="2">
    <location>
        <begin position="29"/>
        <end position="80"/>
    </location>
</feature>
<feature type="region of interest" description="Disordered" evidence="2">
    <location>
        <begin position="359"/>
        <end position="379"/>
    </location>
</feature>
<feature type="compositionally biased region" description="Polar residues" evidence="2">
    <location>
        <begin position="29"/>
        <end position="44"/>
    </location>
</feature>
<name>FES1_CRYNB</name>
<protein>
    <recommendedName>
        <fullName>Hsp70 nucleotide exchange factor FES1</fullName>
    </recommendedName>
</protein>
<reference key="1">
    <citation type="journal article" date="2005" name="Science">
        <title>The genome of the basidiomycetous yeast and human pathogen Cryptococcus neoformans.</title>
        <authorList>
            <person name="Loftus B.J."/>
            <person name="Fung E."/>
            <person name="Roncaglia P."/>
            <person name="Rowley D."/>
            <person name="Amedeo P."/>
            <person name="Bruno D."/>
            <person name="Vamathevan J."/>
            <person name="Miranda M."/>
            <person name="Anderson I.J."/>
            <person name="Fraser J.A."/>
            <person name="Allen J.E."/>
            <person name="Bosdet I.E."/>
            <person name="Brent M.R."/>
            <person name="Chiu R."/>
            <person name="Doering T.L."/>
            <person name="Donlin M.J."/>
            <person name="D'Souza C.A."/>
            <person name="Fox D.S."/>
            <person name="Grinberg V."/>
            <person name="Fu J."/>
            <person name="Fukushima M."/>
            <person name="Haas B.J."/>
            <person name="Huang J.C."/>
            <person name="Janbon G."/>
            <person name="Jones S.J.M."/>
            <person name="Koo H.L."/>
            <person name="Krzywinski M.I."/>
            <person name="Kwon-Chung K.J."/>
            <person name="Lengeler K.B."/>
            <person name="Maiti R."/>
            <person name="Marra M.A."/>
            <person name="Marra R.E."/>
            <person name="Mathewson C.A."/>
            <person name="Mitchell T.G."/>
            <person name="Pertea M."/>
            <person name="Riggs F.R."/>
            <person name="Salzberg S.L."/>
            <person name="Schein J.E."/>
            <person name="Shvartsbeyn A."/>
            <person name="Shin H."/>
            <person name="Shumway M."/>
            <person name="Specht C.A."/>
            <person name="Suh B.B."/>
            <person name="Tenney A."/>
            <person name="Utterback T.R."/>
            <person name="Wickes B.L."/>
            <person name="Wortman J.R."/>
            <person name="Wye N.H."/>
            <person name="Kronstad J.W."/>
            <person name="Lodge J.K."/>
            <person name="Heitman J."/>
            <person name="Davis R.W."/>
            <person name="Fraser C.M."/>
            <person name="Hyman R.W."/>
        </authorList>
    </citation>
    <scope>NUCLEOTIDE SEQUENCE [LARGE SCALE GENOMIC DNA]</scope>
    <source>
        <strain>B-3501A</strain>
    </source>
</reference>
<organism>
    <name type="scientific">Cryptococcus neoformans var. neoformans serotype D (strain B-3501A)</name>
    <name type="common">Filobasidiella neoformans</name>
    <dbReference type="NCBI Taxonomy" id="283643"/>
    <lineage>
        <taxon>Eukaryota</taxon>
        <taxon>Fungi</taxon>
        <taxon>Dikarya</taxon>
        <taxon>Basidiomycota</taxon>
        <taxon>Agaricomycotina</taxon>
        <taxon>Tremellomycetes</taxon>
        <taxon>Tremellales</taxon>
        <taxon>Cryptococcaceae</taxon>
        <taxon>Cryptococcus</taxon>
        <taxon>Cryptococcus neoformans species complex</taxon>
    </lineage>
</organism>
<evidence type="ECO:0000250" key="1"/>
<evidence type="ECO:0000256" key="2">
    <source>
        <dbReference type="SAM" id="MobiDB-lite"/>
    </source>
</evidence>
<evidence type="ECO:0000305" key="3"/>
<dbReference type="EMBL" id="AAEY01000020">
    <property type="protein sequence ID" value="EAL21271.1"/>
    <property type="molecule type" value="Genomic_DNA"/>
</dbReference>
<dbReference type="RefSeq" id="XP_775918.1">
    <property type="nucleotide sequence ID" value="XM_770825.1"/>
</dbReference>
<dbReference type="SMR" id="P0CN69"/>
<dbReference type="EnsemblFungi" id="AAW43373">
    <property type="protein sequence ID" value="AAW43373"/>
    <property type="gene ID" value="CND03100"/>
</dbReference>
<dbReference type="GeneID" id="4935714"/>
<dbReference type="KEGG" id="cnb:CNBD3250"/>
<dbReference type="VEuPathDB" id="FungiDB:CNBD3250"/>
<dbReference type="HOGENOM" id="CLU_046722_0_0_1"/>
<dbReference type="OrthoDB" id="5108at5206"/>
<dbReference type="GO" id="GO:0005783">
    <property type="term" value="C:endoplasmic reticulum"/>
    <property type="evidence" value="ECO:0007669"/>
    <property type="project" value="TreeGrafter"/>
</dbReference>
<dbReference type="GO" id="GO:0000774">
    <property type="term" value="F:adenyl-nucleotide exchange factor activity"/>
    <property type="evidence" value="ECO:0007669"/>
    <property type="project" value="TreeGrafter"/>
</dbReference>
<dbReference type="GO" id="GO:0006417">
    <property type="term" value="P:regulation of translation"/>
    <property type="evidence" value="ECO:0007669"/>
    <property type="project" value="UniProtKB-KW"/>
</dbReference>
<dbReference type="FunFam" id="1.25.10.10:FF:000768">
    <property type="entry name" value="Unplaced genomic scaffold supercont1.2, whole genome shotgun sequence"/>
    <property type="match status" value="1"/>
</dbReference>
<dbReference type="Gene3D" id="1.25.10.10">
    <property type="entry name" value="Leucine-rich Repeat Variant"/>
    <property type="match status" value="1"/>
</dbReference>
<dbReference type="InterPro" id="IPR011989">
    <property type="entry name" value="ARM-like"/>
</dbReference>
<dbReference type="InterPro" id="IPR016024">
    <property type="entry name" value="ARM-type_fold"/>
</dbReference>
<dbReference type="InterPro" id="IPR050693">
    <property type="entry name" value="Hsp70_NEF-Inhibitors"/>
</dbReference>
<dbReference type="InterPro" id="IPR013918">
    <property type="entry name" value="Nucleotide_exch_fac_Fes1"/>
</dbReference>
<dbReference type="PANTHER" id="PTHR19316:SF18">
    <property type="entry name" value="HSP70-BINDING PROTEIN 1"/>
    <property type="match status" value="1"/>
</dbReference>
<dbReference type="PANTHER" id="PTHR19316">
    <property type="entry name" value="PROTEIN FOLDING REGULATOR"/>
    <property type="match status" value="1"/>
</dbReference>
<dbReference type="Pfam" id="PF08609">
    <property type="entry name" value="Fes1"/>
    <property type="match status" value="1"/>
</dbReference>
<dbReference type="SUPFAM" id="SSF48371">
    <property type="entry name" value="ARM repeat"/>
    <property type="match status" value="1"/>
</dbReference>
<comment type="function">
    <text evidence="1">Functions as a nucleotide exchange factor (NEF) for Hsp70 chaperones which accelerates the release of ADP. Required for fully efficient Hsp70-mediated folding of proteins (By similarity).</text>
</comment>
<comment type="subcellular location">
    <subcellularLocation>
        <location evidence="1">Cytoplasm</location>
    </subcellularLocation>
</comment>
<comment type="similarity">
    <text evidence="3">Belongs to the FES1 family.</text>
</comment>
<keyword id="KW-0963">Cytoplasm</keyword>
<keyword id="KW-0677">Repeat</keyword>
<keyword id="KW-0810">Translation regulation</keyword>
<proteinExistence type="inferred from homology"/>
<sequence>MPDINELLRWSIANSTAPDTDASEQLQIRFNPNSTQSGTSTLHASDSGPPDISPASTPGPVTPDDGSSLPLPPGTEVPVTKKEDLTTEMLDLILGKGDSITMKEKMAFATDENNSVEDRVEALDDFEMLIELIDNANNMPILKLWDPLLTLLSSSHPEIVAHTCWIIGTAIQNNIKAQAAFYIHETFSRILEIIYPPSSISSYPPSVRAKATYALSAALKHWPLASYALYTATSSAENGYSVLRRGVNDPQAIVRRKMAFLVGTLAMQSGERYEGEIPSEVRNYIEENEKNAPSESLVEGLKREGVFTALVDGLKQGVDDVEYEENAMRALVRAHQKGGLTVSEKSDLKTIWEKWGKQGRQERGLDGEDGKEVSETLSS</sequence>